<dbReference type="EMBL" id="CP001657">
    <property type="protein sequence ID" value="ACT11640.1"/>
    <property type="molecule type" value="Genomic_DNA"/>
</dbReference>
<dbReference type="RefSeq" id="WP_012773288.1">
    <property type="nucleotide sequence ID" value="NC_012917.1"/>
</dbReference>
<dbReference type="SMR" id="C6DKK3"/>
<dbReference type="STRING" id="561230.PC1_0585"/>
<dbReference type="GeneID" id="67795578"/>
<dbReference type="KEGG" id="pct:PC1_0585"/>
<dbReference type="eggNOG" id="COG0532">
    <property type="taxonomic scope" value="Bacteria"/>
</dbReference>
<dbReference type="HOGENOM" id="CLU_006301_6_3_6"/>
<dbReference type="OrthoDB" id="9811804at2"/>
<dbReference type="Proteomes" id="UP000002736">
    <property type="component" value="Chromosome"/>
</dbReference>
<dbReference type="GO" id="GO:0005829">
    <property type="term" value="C:cytosol"/>
    <property type="evidence" value="ECO:0007669"/>
    <property type="project" value="TreeGrafter"/>
</dbReference>
<dbReference type="GO" id="GO:0005525">
    <property type="term" value="F:GTP binding"/>
    <property type="evidence" value="ECO:0007669"/>
    <property type="project" value="UniProtKB-KW"/>
</dbReference>
<dbReference type="GO" id="GO:0003924">
    <property type="term" value="F:GTPase activity"/>
    <property type="evidence" value="ECO:0007669"/>
    <property type="project" value="UniProtKB-UniRule"/>
</dbReference>
<dbReference type="GO" id="GO:0097216">
    <property type="term" value="F:guanosine tetraphosphate binding"/>
    <property type="evidence" value="ECO:0007669"/>
    <property type="project" value="UniProtKB-ARBA"/>
</dbReference>
<dbReference type="GO" id="GO:0003743">
    <property type="term" value="F:translation initiation factor activity"/>
    <property type="evidence" value="ECO:0007669"/>
    <property type="project" value="UniProtKB-UniRule"/>
</dbReference>
<dbReference type="CDD" id="cd01887">
    <property type="entry name" value="IF2_eIF5B"/>
    <property type="match status" value="1"/>
</dbReference>
<dbReference type="CDD" id="cd03702">
    <property type="entry name" value="IF2_mtIF2_II"/>
    <property type="match status" value="1"/>
</dbReference>
<dbReference type="CDD" id="cd03692">
    <property type="entry name" value="mtIF2_IVc"/>
    <property type="match status" value="1"/>
</dbReference>
<dbReference type="FunFam" id="2.40.30.10:FF:000007">
    <property type="entry name" value="Translation initiation factor IF-2"/>
    <property type="match status" value="1"/>
</dbReference>
<dbReference type="FunFam" id="2.40.30.10:FF:000008">
    <property type="entry name" value="Translation initiation factor IF-2"/>
    <property type="match status" value="1"/>
</dbReference>
<dbReference type="FunFam" id="3.30.56.50:FF:000001">
    <property type="entry name" value="Translation initiation factor IF-2"/>
    <property type="match status" value="1"/>
</dbReference>
<dbReference type="FunFam" id="3.40.50.10050:FF:000001">
    <property type="entry name" value="Translation initiation factor IF-2"/>
    <property type="match status" value="1"/>
</dbReference>
<dbReference type="FunFam" id="3.40.50.300:FF:000019">
    <property type="entry name" value="Translation initiation factor IF-2"/>
    <property type="match status" value="1"/>
</dbReference>
<dbReference type="Gene3D" id="3.40.50.300">
    <property type="entry name" value="P-loop containing nucleotide triphosphate hydrolases"/>
    <property type="match status" value="1"/>
</dbReference>
<dbReference type="Gene3D" id="3.30.56.50">
    <property type="entry name" value="Putative DNA-binding domain, N-terminal subdomain of bacterial translation initiation factor IF2"/>
    <property type="match status" value="1"/>
</dbReference>
<dbReference type="Gene3D" id="2.40.30.10">
    <property type="entry name" value="Translation factors"/>
    <property type="match status" value="2"/>
</dbReference>
<dbReference type="Gene3D" id="3.40.50.10050">
    <property type="entry name" value="Translation initiation factor IF- 2, domain 3"/>
    <property type="match status" value="1"/>
</dbReference>
<dbReference type="HAMAP" id="MF_00100_B">
    <property type="entry name" value="IF_2_B"/>
    <property type="match status" value="1"/>
</dbReference>
<dbReference type="InterPro" id="IPR009061">
    <property type="entry name" value="DNA-bd_dom_put_sf"/>
</dbReference>
<dbReference type="InterPro" id="IPR053905">
    <property type="entry name" value="EF-G-like_DII"/>
</dbReference>
<dbReference type="InterPro" id="IPR004161">
    <property type="entry name" value="EFTu-like_2"/>
</dbReference>
<dbReference type="InterPro" id="IPR013575">
    <property type="entry name" value="IF2_assoc_dom_bac"/>
</dbReference>
<dbReference type="InterPro" id="IPR044145">
    <property type="entry name" value="IF2_II"/>
</dbReference>
<dbReference type="InterPro" id="IPR006847">
    <property type="entry name" value="IF2_N"/>
</dbReference>
<dbReference type="InterPro" id="IPR027417">
    <property type="entry name" value="P-loop_NTPase"/>
</dbReference>
<dbReference type="InterPro" id="IPR005225">
    <property type="entry name" value="Small_GTP-bd"/>
</dbReference>
<dbReference type="InterPro" id="IPR000795">
    <property type="entry name" value="T_Tr_GTP-bd_dom"/>
</dbReference>
<dbReference type="InterPro" id="IPR000178">
    <property type="entry name" value="TF_IF2_bacterial-like"/>
</dbReference>
<dbReference type="InterPro" id="IPR015760">
    <property type="entry name" value="TIF_IF2"/>
</dbReference>
<dbReference type="InterPro" id="IPR023115">
    <property type="entry name" value="TIF_IF2_dom3"/>
</dbReference>
<dbReference type="InterPro" id="IPR036925">
    <property type="entry name" value="TIF_IF2_dom3_sf"/>
</dbReference>
<dbReference type="InterPro" id="IPR009000">
    <property type="entry name" value="Transl_B-barrel_sf"/>
</dbReference>
<dbReference type="NCBIfam" id="TIGR00487">
    <property type="entry name" value="IF-2"/>
    <property type="match status" value="1"/>
</dbReference>
<dbReference type="NCBIfam" id="TIGR00231">
    <property type="entry name" value="small_GTP"/>
    <property type="match status" value="1"/>
</dbReference>
<dbReference type="PANTHER" id="PTHR43381:SF5">
    <property type="entry name" value="TR-TYPE G DOMAIN-CONTAINING PROTEIN"/>
    <property type="match status" value="1"/>
</dbReference>
<dbReference type="PANTHER" id="PTHR43381">
    <property type="entry name" value="TRANSLATION INITIATION FACTOR IF-2-RELATED"/>
    <property type="match status" value="1"/>
</dbReference>
<dbReference type="Pfam" id="PF22042">
    <property type="entry name" value="EF-G_D2"/>
    <property type="match status" value="1"/>
</dbReference>
<dbReference type="Pfam" id="PF00009">
    <property type="entry name" value="GTP_EFTU"/>
    <property type="match status" value="1"/>
</dbReference>
<dbReference type="Pfam" id="PF03144">
    <property type="entry name" value="GTP_EFTU_D2"/>
    <property type="match status" value="1"/>
</dbReference>
<dbReference type="Pfam" id="PF11987">
    <property type="entry name" value="IF-2"/>
    <property type="match status" value="1"/>
</dbReference>
<dbReference type="Pfam" id="PF08364">
    <property type="entry name" value="IF2_assoc"/>
    <property type="match status" value="1"/>
</dbReference>
<dbReference type="Pfam" id="PF04760">
    <property type="entry name" value="IF2_N"/>
    <property type="match status" value="2"/>
</dbReference>
<dbReference type="SUPFAM" id="SSF52156">
    <property type="entry name" value="Initiation factor IF2/eIF5b, domain 3"/>
    <property type="match status" value="1"/>
</dbReference>
<dbReference type="SUPFAM" id="SSF52540">
    <property type="entry name" value="P-loop containing nucleoside triphosphate hydrolases"/>
    <property type="match status" value="1"/>
</dbReference>
<dbReference type="SUPFAM" id="SSF46955">
    <property type="entry name" value="Putative DNA-binding domain"/>
    <property type="match status" value="1"/>
</dbReference>
<dbReference type="SUPFAM" id="SSF50447">
    <property type="entry name" value="Translation proteins"/>
    <property type="match status" value="2"/>
</dbReference>
<dbReference type="PROSITE" id="PS51722">
    <property type="entry name" value="G_TR_2"/>
    <property type="match status" value="1"/>
</dbReference>
<dbReference type="PROSITE" id="PS01176">
    <property type="entry name" value="IF2"/>
    <property type="match status" value="1"/>
</dbReference>
<evidence type="ECO:0000250" key="1"/>
<evidence type="ECO:0000255" key="2">
    <source>
        <dbReference type="HAMAP-Rule" id="MF_00100"/>
    </source>
</evidence>
<evidence type="ECO:0000256" key="3">
    <source>
        <dbReference type="SAM" id="MobiDB-lite"/>
    </source>
</evidence>
<accession>C6DKK3</accession>
<gene>
    <name evidence="2" type="primary">infB</name>
    <name type="ordered locus">PC1_0585</name>
</gene>
<keyword id="KW-0963">Cytoplasm</keyword>
<keyword id="KW-0342">GTP-binding</keyword>
<keyword id="KW-0396">Initiation factor</keyword>
<keyword id="KW-0547">Nucleotide-binding</keyword>
<keyword id="KW-0648">Protein biosynthesis</keyword>
<protein>
    <recommendedName>
        <fullName evidence="2">Translation initiation factor IF-2</fullName>
    </recommendedName>
</protein>
<comment type="function">
    <text evidence="2">One of the essential components for the initiation of protein synthesis. Protects formylmethionyl-tRNA from spontaneous hydrolysis and promotes its binding to the 30S ribosomal subunits. Also involved in the hydrolysis of GTP during the formation of the 70S ribosomal complex.</text>
</comment>
<comment type="subcellular location">
    <subcellularLocation>
        <location evidence="2">Cytoplasm</location>
    </subcellularLocation>
</comment>
<comment type="similarity">
    <text evidence="2">Belongs to the TRAFAC class translation factor GTPase superfamily. Classic translation factor GTPase family. IF-2 subfamily.</text>
</comment>
<organism>
    <name type="scientific">Pectobacterium carotovorum subsp. carotovorum (strain PC1)</name>
    <dbReference type="NCBI Taxonomy" id="561230"/>
    <lineage>
        <taxon>Bacteria</taxon>
        <taxon>Pseudomonadati</taxon>
        <taxon>Pseudomonadota</taxon>
        <taxon>Gammaproteobacteria</taxon>
        <taxon>Enterobacterales</taxon>
        <taxon>Pectobacteriaceae</taxon>
        <taxon>Pectobacterium</taxon>
    </lineage>
</organism>
<sequence length="899" mass="98571">MTDVTVKSLAAEIQTPVDRLIQQFADAGMTKSASDAVTQHEKETLLAHLNRDRGNAQGKLTLQRKTRSTLNVPSTGGKSKSVQIEVRKTRTYVKRDPIDAQQAEEEEQARREAEEQAQRAAEEQAKREAELREAAEKAKRAADEQAKREAAEKAKRDVAEKEKVTNQQNENMTKPAQAEKAKREAEAAELKRKAEEAARLKVEEEARRIAEEARRMAEENAGRWEAESAKPEESADYHVTTSHHAREAEDENDRQVEGERRSRSRAGKVTKQKKGNRQSESKADREEARAVTRGGKGKRKPSSLQQSFNKPVQAVNRDVVIGETVTVAELANKMAVKGSQVIKVMMKLGAMATINQVIDQETAQLVAEEMGHKVILRRENELEEAVMSDRDTGVAAEARAPVVTIMGHVDHGKTSLLDYIRSTKVAAGEAGGITQHIGAYHVETDNGMITFLDTPGHAAFTAMRARGAQATDIVVLVVAADDGVMPQTIEAIQHAKAAQVPVVVAVNKIDKPEADPDRVKTELSQYGVMPEEWGGESQFVHVSAKAGTGIDELLDAILLQAEVLELKAVRSGMANGVVIESFLDKGRGPVATVLVREGTLNKGDIVLCGFEYGRVRAMRDELGREITSAGPSIPVEILGMSGVPAAGDEATVVRDEKKAREVALYRQGKFREVKLARQQKSKLENMFANMTEGEVSELNIVLKSDVQGSCEAISDSLQKLSTDEVKVKIVGSGVGGITETDATLAAASNAIILGFNVRADASARRIVESESLDLRYYSVIYDLLDEVKQAMSGMLAPEYKQEIIGLAEVRDVFKSPKFGAIAGCMVTEGIVKRHNKIRVLRDNVVIYEGELESLRRFKDDVNEVRNGMECGIGVKNYNDVRPGDMIEVFETIEIKRTIA</sequence>
<proteinExistence type="inferred from homology"/>
<reference key="1">
    <citation type="submission" date="2009-07" db="EMBL/GenBank/DDBJ databases">
        <title>Complete sequence of Pectobacterium carotovorum subsp. carotovorum PC1.</title>
        <authorList>
            <consortium name="US DOE Joint Genome Institute"/>
            <person name="Lucas S."/>
            <person name="Copeland A."/>
            <person name="Lapidus A."/>
            <person name="Glavina del Rio T."/>
            <person name="Tice H."/>
            <person name="Bruce D."/>
            <person name="Goodwin L."/>
            <person name="Pitluck S."/>
            <person name="Munk A.C."/>
            <person name="Brettin T."/>
            <person name="Detter J.C."/>
            <person name="Han C."/>
            <person name="Tapia R."/>
            <person name="Larimer F."/>
            <person name="Land M."/>
            <person name="Hauser L."/>
            <person name="Kyrpides N."/>
            <person name="Mikhailova N."/>
            <person name="Balakrishnan V."/>
            <person name="Glasner J."/>
            <person name="Perna N.T."/>
        </authorList>
    </citation>
    <scope>NUCLEOTIDE SEQUENCE [LARGE SCALE GENOMIC DNA]</scope>
    <source>
        <strain>PC1</strain>
    </source>
</reference>
<feature type="chain" id="PRO_1000202781" description="Translation initiation factor IF-2">
    <location>
        <begin position="1"/>
        <end position="899"/>
    </location>
</feature>
<feature type="domain" description="tr-type G">
    <location>
        <begin position="398"/>
        <end position="567"/>
    </location>
</feature>
<feature type="region of interest" description="Disordered" evidence="3">
    <location>
        <begin position="65"/>
        <end position="84"/>
    </location>
</feature>
<feature type="region of interest" description="Disordered" evidence="3">
    <location>
        <begin position="91"/>
        <end position="310"/>
    </location>
</feature>
<feature type="region of interest" description="G1" evidence="1">
    <location>
        <begin position="407"/>
        <end position="414"/>
    </location>
</feature>
<feature type="region of interest" description="G2" evidence="1">
    <location>
        <begin position="432"/>
        <end position="436"/>
    </location>
</feature>
<feature type="region of interest" description="G3" evidence="1">
    <location>
        <begin position="453"/>
        <end position="456"/>
    </location>
</feature>
<feature type="region of interest" description="G4" evidence="1">
    <location>
        <begin position="507"/>
        <end position="510"/>
    </location>
</feature>
<feature type="region of interest" description="G5" evidence="1">
    <location>
        <begin position="543"/>
        <end position="545"/>
    </location>
</feature>
<feature type="compositionally biased region" description="Polar residues" evidence="3">
    <location>
        <begin position="68"/>
        <end position="82"/>
    </location>
</feature>
<feature type="compositionally biased region" description="Basic and acidic residues" evidence="3">
    <location>
        <begin position="108"/>
        <end position="164"/>
    </location>
</feature>
<feature type="compositionally biased region" description="Polar residues" evidence="3">
    <location>
        <begin position="165"/>
        <end position="174"/>
    </location>
</feature>
<feature type="compositionally biased region" description="Basic and acidic residues" evidence="3">
    <location>
        <begin position="177"/>
        <end position="236"/>
    </location>
</feature>
<feature type="compositionally biased region" description="Basic residues" evidence="3">
    <location>
        <begin position="262"/>
        <end position="276"/>
    </location>
</feature>
<feature type="compositionally biased region" description="Basic and acidic residues" evidence="3">
    <location>
        <begin position="277"/>
        <end position="290"/>
    </location>
</feature>
<feature type="binding site" evidence="2">
    <location>
        <begin position="407"/>
        <end position="414"/>
    </location>
    <ligand>
        <name>GTP</name>
        <dbReference type="ChEBI" id="CHEBI:37565"/>
    </ligand>
</feature>
<feature type="binding site" evidence="2">
    <location>
        <begin position="453"/>
        <end position="457"/>
    </location>
    <ligand>
        <name>GTP</name>
        <dbReference type="ChEBI" id="CHEBI:37565"/>
    </ligand>
</feature>
<feature type="binding site" evidence="2">
    <location>
        <begin position="507"/>
        <end position="510"/>
    </location>
    <ligand>
        <name>GTP</name>
        <dbReference type="ChEBI" id="CHEBI:37565"/>
    </ligand>
</feature>
<name>IF2_PECCP</name>